<keyword id="KW-0119">Carbohydrate metabolism</keyword>
<keyword id="KW-0325">Glycoprotein</keyword>
<keyword id="KW-0326">Glycosidase</keyword>
<keyword id="KW-0378">Hydrolase</keyword>
<keyword id="KW-0624">Polysaccharide degradation</keyword>
<keyword id="KW-1185">Reference proteome</keyword>
<keyword id="KW-0964">Secreted</keyword>
<keyword id="KW-0732">Signal</keyword>
<sequence>MVAFSTISGLGALSLLFSIIESVDGVSLKVSTDGGNSSSPLLYGFMFEDINHSGDGGIYGQMIQNNGLQGSSPNLTAWASVGDGTISVDTTNPLTAAIPNSLKLDIKPDATGAVGFTNEGYWGIPVDGTEFQNSFWMKGDFSGEITVRLVGNETGTEYGSTTFNQSSSSDDYTKVSVKFPTTKAPDGNVLYELTVDGESAQGSSLSFTLFELFAQTYKSRSNGLKPQLADALESVKGSFLRFPGGNNLEGNDVETRWKWNETIGPLENRPGHQGTWGYFNTDGLGLDEYLYWCEDMNLTPVLGVWAGFALESGGNTPITGDALTPYIEDVLNELEYVLGDPSTTYGKLRASYGREEPWNVTLVEIGNEDNLGGGCESYAERFTAFYNAIHDAYPDLTLIASTDNASCLPSPLPEGAWVDYHNYNTPDELVKQFGMFDNVDRSVPYFIGEYSRWEIPWPNMQGSVAEAVFMIGLERNSDVVKMAAYAPLLQLVNSTQWTPDLISFTQNPNMVIDSTSYYVQQMFSVNRGDTIKEVTSDSAFGPVYWVASSSGSSYYVKLANYGADTQEVSVSIPGMSSGKLTVLADSDPEAYNSDTQTLVTPSESNVQASNGQFSFTLPAWSVAVLTAN</sequence>
<gene>
    <name type="primary">abfA</name>
    <name type="ORF">ATEG_02882</name>
</gene>
<feature type="signal peptide">
    <location>
        <begin position="1"/>
        <end position="25"/>
    </location>
</feature>
<feature type="chain" id="PRO_0000394600" description="Probable alpha-L-arabinofuranosidase A">
    <location>
        <begin position="26"/>
        <end position="628"/>
    </location>
</feature>
<feature type="glycosylation site" description="N-linked (GlcNAc...) asparagine" evidence="2">
    <location>
        <position position="36"/>
    </location>
</feature>
<feature type="glycosylation site" description="N-linked (GlcNAc...) asparagine" evidence="2">
    <location>
        <position position="51"/>
    </location>
</feature>
<feature type="glycosylation site" description="N-linked (GlcNAc...) asparagine" evidence="2">
    <location>
        <position position="74"/>
    </location>
</feature>
<feature type="glycosylation site" description="N-linked (GlcNAc...) asparagine" evidence="2">
    <location>
        <position position="152"/>
    </location>
</feature>
<feature type="glycosylation site" description="N-linked (GlcNAc...) asparagine" evidence="2">
    <location>
        <position position="164"/>
    </location>
</feature>
<feature type="glycosylation site" description="N-linked (GlcNAc...) asparagine" evidence="2">
    <location>
        <position position="260"/>
    </location>
</feature>
<feature type="glycosylation site" description="N-linked (GlcNAc...) asparagine" evidence="2">
    <location>
        <position position="359"/>
    </location>
</feature>
<feature type="glycosylation site" description="N-linked (GlcNAc...) asparagine" evidence="2">
    <location>
        <position position="404"/>
    </location>
</feature>
<feature type="glycosylation site" description="N-linked (GlcNAc...) asparagine" evidence="2">
    <location>
        <position position="493"/>
    </location>
</feature>
<name>ABFA_ASPTN</name>
<proteinExistence type="inferred from homology"/>
<accession>Q0CTV2</accession>
<comment type="function">
    <text evidence="1">Alpha-L-arabinofuranosidase involved in the degradation of arabinoxylan, a major component of plant hemicellulose. Acts only on small linear 1,5-alpha-linked L-arabinofuranosyl oligosaccharides (By similarity).</text>
</comment>
<comment type="catalytic activity">
    <reaction>
        <text>Hydrolysis of terminal non-reducing alpha-L-arabinofuranoside residues in alpha-L-arabinosides.</text>
        <dbReference type="EC" id="3.2.1.55"/>
    </reaction>
</comment>
<comment type="pathway">
    <text>Glycan metabolism; L-arabinan degradation.</text>
</comment>
<comment type="subcellular location">
    <subcellularLocation>
        <location evidence="1">Secreted</location>
    </subcellularLocation>
</comment>
<comment type="similarity">
    <text evidence="3">Belongs to the glycosyl hydrolase 51 family.</text>
</comment>
<reference key="1">
    <citation type="submission" date="2005-09" db="EMBL/GenBank/DDBJ databases">
        <title>Annotation of the Aspergillus terreus NIH2624 genome.</title>
        <authorList>
            <person name="Birren B.W."/>
            <person name="Lander E.S."/>
            <person name="Galagan J.E."/>
            <person name="Nusbaum C."/>
            <person name="Devon K."/>
            <person name="Henn M."/>
            <person name="Ma L.-J."/>
            <person name="Jaffe D.B."/>
            <person name="Butler J."/>
            <person name="Alvarez P."/>
            <person name="Gnerre S."/>
            <person name="Grabherr M."/>
            <person name="Kleber M."/>
            <person name="Mauceli E.W."/>
            <person name="Brockman W."/>
            <person name="Rounsley S."/>
            <person name="Young S.K."/>
            <person name="LaButti K."/>
            <person name="Pushparaj V."/>
            <person name="DeCaprio D."/>
            <person name="Crawford M."/>
            <person name="Koehrsen M."/>
            <person name="Engels R."/>
            <person name="Montgomery P."/>
            <person name="Pearson M."/>
            <person name="Howarth C."/>
            <person name="Larson L."/>
            <person name="Luoma S."/>
            <person name="White J."/>
            <person name="Alvarado L."/>
            <person name="Kodira C.D."/>
            <person name="Zeng Q."/>
            <person name="Oleary S."/>
            <person name="Yandava C."/>
            <person name="Denning D.W."/>
            <person name="Nierman W.C."/>
            <person name="Milne T."/>
            <person name="Madden K."/>
        </authorList>
    </citation>
    <scope>NUCLEOTIDE SEQUENCE [LARGE SCALE GENOMIC DNA]</scope>
    <source>
        <strain>NIH 2624 / FGSC A1156</strain>
    </source>
</reference>
<organism>
    <name type="scientific">Aspergillus terreus (strain NIH 2624 / FGSC A1156)</name>
    <dbReference type="NCBI Taxonomy" id="341663"/>
    <lineage>
        <taxon>Eukaryota</taxon>
        <taxon>Fungi</taxon>
        <taxon>Dikarya</taxon>
        <taxon>Ascomycota</taxon>
        <taxon>Pezizomycotina</taxon>
        <taxon>Eurotiomycetes</taxon>
        <taxon>Eurotiomycetidae</taxon>
        <taxon>Eurotiales</taxon>
        <taxon>Aspergillaceae</taxon>
        <taxon>Aspergillus</taxon>
        <taxon>Aspergillus subgen. Circumdati</taxon>
    </lineage>
</organism>
<dbReference type="EC" id="3.2.1.55"/>
<dbReference type="EMBL" id="CH476597">
    <property type="protein sequence ID" value="EAU36156.1"/>
    <property type="molecule type" value="Genomic_DNA"/>
</dbReference>
<dbReference type="RefSeq" id="XP_001212060.1">
    <property type="nucleotide sequence ID" value="XM_001212060.1"/>
</dbReference>
<dbReference type="SMR" id="Q0CTV2"/>
<dbReference type="STRING" id="341663.Q0CTV2"/>
<dbReference type="GlyCosmos" id="Q0CTV2">
    <property type="glycosylation" value="9 sites, No reported glycans"/>
</dbReference>
<dbReference type="EnsemblFungi" id="EAU36156">
    <property type="protein sequence ID" value="EAU36156"/>
    <property type="gene ID" value="ATEG_02882"/>
</dbReference>
<dbReference type="GeneID" id="4317643"/>
<dbReference type="VEuPathDB" id="FungiDB:ATEG_02882"/>
<dbReference type="eggNOG" id="ENOG502QQEX">
    <property type="taxonomic scope" value="Eukaryota"/>
</dbReference>
<dbReference type="HOGENOM" id="CLU_010060_1_1_1"/>
<dbReference type="OMA" id="PYFIGEY"/>
<dbReference type="OrthoDB" id="406864at2759"/>
<dbReference type="UniPathway" id="UPA00667"/>
<dbReference type="Proteomes" id="UP000007963">
    <property type="component" value="Unassembled WGS sequence"/>
</dbReference>
<dbReference type="GO" id="GO:0005576">
    <property type="term" value="C:extracellular region"/>
    <property type="evidence" value="ECO:0000250"/>
    <property type="project" value="UniProtKB"/>
</dbReference>
<dbReference type="GO" id="GO:0046556">
    <property type="term" value="F:alpha-L-arabinofuranosidase activity"/>
    <property type="evidence" value="ECO:0000250"/>
    <property type="project" value="UniProtKB"/>
</dbReference>
<dbReference type="GO" id="GO:0031222">
    <property type="term" value="P:arabinan catabolic process"/>
    <property type="evidence" value="ECO:0007669"/>
    <property type="project" value="UniProtKB-UniPathway"/>
</dbReference>
<dbReference type="GO" id="GO:0019566">
    <property type="term" value="P:arabinose metabolic process"/>
    <property type="evidence" value="ECO:0000250"/>
    <property type="project" value="UniProtKB"/>
</dbReference>
<dbReference type="GO" id="GO:0046373">
    <property type="term" value="P:L-arabinose metabolic process"/>
    <property type="evidence" value="ECO:0007669"/>
    <property type="project" value="InterPro"/>
</dbReference>
<dbReference type="FunFam" id="2.60.40.1180:FF:000036">
    <property type="entry name" value="Probable alpha-L-arabinofuranosidase A"/>
    <property type="match status" value="1"/>
</dbReference>
<dbReference type="FunFam" id="3.20.20.80:FF:000092">
    <property type="entry name" value="Probable alpha-L-arabinofuranosidase A"/>
    <property type="match status" value="1"/>
</dbReference>
<dbReference type="Gene3D" id="3.20.20.80">
    <property type="entry name" value="Glycosidases"/>
    <property type="match status" value="1"/>
</dbReference>
<dbReference type="Gene3D" id="2.60.40.1180">
    <property type="entry name" value="Golgi alpha-mannosidase II"/>
    <property type="match status" value="1"/>
</dbReference>
<dbReference type="InterPro" id="IPR010720">
    <property type="entry name" value="Alpha-L-AF_C"/>
</dbReference>
<dbReference type="InterPro" id="IPR055235">
    <property type="entry name" value="ASD1_cat"/>
</dbReference>
<dbReference type="InterPro" id="IPR013780">
    <property type="entry name" value="Glyco_hydro_b"/>
</dbReference>
<dbReference type="InterPro" id="IPR017853">
    <property type="entry name" value="Glycoside_hydrolase_SF"/>
</dbReference>
<dbReference type="InterPro" id="IPR051563">
    <property type="entry name" value="Glycosyl_Hydrolase_51"/>
</dbReference>
<dbReference type="PANTHER" id="PTHR31776">
    <property type="entry name" value="ALPHA-L-ARABINOFURANOSIDASE 1"/>
    <property type="match status" value="1"/>
</dbReference>
<dbReference type="PANTHER" id="PTHR31776:SF0">
    <property type="entry name" value="ALPHA-L-ARABINOFURANOSIDASE 1"/>
    <property type="match status" value="1"/>
</dbReference>
<dbReference type="Pfam" id="PF06964">
    <property type="entry name" value="Alpha-L-AF_C"/>
    <property type="match status" value="1"/>
</dbReference>
<dbReference type="Pfam" id="PF22848">
    <property type="entry name" value="ASD1_dom"/>
    <property type="match status" value="1"/>
</dbReference>
<dbReference type="SMART" id="SM00813">
    <property type="entry name" value="Alpha-L-AF_C"/>
    <property type="match status" value="1"/>
</dbReference>
<dbReference type="SUPFAM" id="SSF51445">
    <property type="entry name" value="(Trans)glycosidases"/>
    <property type="match status" value="1"/>
</dbReference>
<dbReference type="SUPFAM" id="SSF51011">
    <property type="entry name" value="Glycosyl hydrolase domain"/>
    <property type="match status" value="1"/>
</dbReference>
<protein>
    <recommendedName>
        <fullName>Probable alpha-L-arabinofuranosidase A</fullName>
        <shortName>ABF A</shortName>
        <shortName>Arabinosidase A</shortName>
        <ecNumber>3.2.1.55</ecNumber>
    </recommendedName>
</protein>
<evidence type="ECO:0000250" key="1"/>
<evidence type="ECO:0000255" key="2"/>
<evidence type="ECO:0000305" key="3"/>